<gene>
    <name evidence="1" type="primary">rpsJ</name>
    <name evidence="1" type="synonym">rps10</name>
    <name type="ordered locus">Synpcc7942_0883</name>
</gene>
<accession>Q31PV6</accession>
<comment type="function">
    <text evidence="1">Involved in the binding of tRNA to the ribosomes.</text>
</comment>
<comment type="subunit">
    <text evidence="1">Part of the 30S ribosomal subunit.</text>
</comment>
<comment type="similarity">
    <text evidence="1">Belongs to the universal ribosomal protein uS10 family.</text>
</comment>
<keyword id="KW-1185">Reference proteome</keyword>
<keyword id="KW-0687">Ribonucleoprotein</keyword>
<keyword id="KW-0689">Ribosomal protein</keyword>
<evidence type="ECO:0000255" key="1">
    <source>
        <dbReference type="HAMAP-Rule" id="MF_00508"/>
    </source>
</evidence>
<evidence type="ECO:0000305" key="2"/>
<proteinExistence type="inferred from homology"/>
<feature type="chain" id="PRO_0000237110" description="Small ribosomal subunit protein uS10">
    <location>
        <begin position="1"/>
        <end position="105"/>
    </location>
</feature>
<dbReference type="EMBL" id="CP000100">
    <property type="protein sequence ID" value="ABB56913.1"/>
    <property type="molecule type" value="Genomic_DNA"/>
</dbReference>
<dbReference type="RefSeq" id="WP_011242969.1">
    <property type="nucleotide sequence ID" value="NZ_JACJTX010000005.1"/>
</dbReference>
<dbReference type="SMR" id="Q31PV6"/>
<dbReference type="STRING" id="1140.Synpcc7942_0883"/>
<dbReference type="PaxDb" id="1140-Synpcc7942_0883"/>
<dbReference type="GeneID" id="72429732"/>
<dbReference type="KEGG" id="syf:Synpcc7942_0883"/>
<dbReference type="eggNOG" id="COG0051">
    <property type="taxonomic scope" value="Bacteria"/>
</dbReference>
<dbReference type="HOGENOM" id="CLU_122625_1_3_3"/>
<dbReference type="OrthoDB" id="9804464at2"/>
<dbReference type="BioCyc" id="SYNEL:SYNPCC7942_0883-MONOMER"/>
<dbReference type="Proteomes" id="UP000889800">
    <property type="component" value="Chromosome"/>
</dbReference>
<dbReference type="GO" id="GO:1990904">
    <property type="term" value="C:ribonucleoprotein complex"/>
    <property type="evidence" value="ECO:0007669"/>
    <property type="project" value="UniProtKB-KW"/>
</dbReference>
<dbReference type="GO" id="GO:0005840">
    <property type="term" value="C:ribosome"/>
    <property type="evidence" value="ECO:0007669"/>
    <property type="project" value="UniProtKB-KW"/>
</dbReference>
<dbReference type="GO" id="GO:0003735">
    <property type="term" value="F:structural constituent of ribosome"/>
    <property type="evidence" value="ECO:0007669"/>
    <property type="project" value="InterPro"/>
</dbReference>
<dbReference type="GO" id="GO:0000049">
    <property type="term" value="F:tRNA binding"/>
    <property type="evidence" value="ECO:0007669"/>
    <property type="project" value="UniProtKB-UniRule"/>
</dbReference>
<dbReference type="GO" id="GO:0006412">
    <property type="term" value="P:translation"/>
    <property type="evidence" value="ECO:0007669"/>
    <property type="project" value="UniProtKB-UniRule"/>
</dbReference>
<dbReference type="FunFam" id="3.30.70.600:FF:000001">
    <property type="entry name" value="30S ribosomal protein S10"/>
    <property type="match status" value="1"/>
</dbReference>
<dbReference type="Gene3D" id="3.30.70.600">
    <property type="entry name" value="Ribosomal protein S10 domain"/>
    <property type="match status" value="1"/>
</dbReference>
<dbReference type="HAMAP" id="MF_00508">
    <property type="entry name" value="Ribosomal_uS10"/>
    <property type="match status" value="1"/>
</dbReference>
<dbReference type="InterPro" id="IPR001848">
    <property type="entry name" value="Ribosomal_uS10"/>
</dbReference>
<dbReference type="InterPro" id="IPR018268">
    <property type="entry name" value="Ribosomal_uS10_CS"/>
</dbReference>
<dbReference type="InterPro" id="IPR027486">
    <property type="entry name" value="Ribosomal_uS10_dom"/>
</dbReference>
<dbReference type="InterPro" id="IPR036838">
    <property type="entry name" value="Ribosomal_uS10_dom_sf"/>
</dbReference>
<dbReference type="NCBIfam" id="NF001861">
    <property type="entry name" value="PRK00596.1"/>
    <property type="match status" value="1"/>
</dbReference>
<dbReference type="NCBIfam" id="TIGR01049">
    <property type="entry name" value="rpsJ_bact"/>
    <property type="match status" value="1"/>
</dbReference>
<dbReference type="PANTHER" id="PTHR11700">
    <property type="entry name" value="30S RIBOSOMAL PROTEIN S10 FAMILY MEMBER"/>
    <property type="match status" value="1"/>
</dbReference>
<dbReference type="Pfam" id="PF00338">
    <property type="entry name" value="Ribosomal_S10"/>
    <property type="match status" value="1"/>
</dbReference>
<dbReference type="PRINTS" id="PR00971">
    <property type="entry name" value="RIBOSOMALS10"/>
</dbReference>
<dbReference type="SMART" id="SM01403">
    <property type="entry name" value="Ribosomal_S10"/>
    <property type="match status" value="1"/>
</dbReference>
<dbReference type="SUPFAM" id="SSF54999">
    <property type="entry name" value="Ribosomal protein S10"/>
    <property type="match status" value="1"/>
</dbReference>
<dbReference type="PROSITE" id="PS00361">
    <property type="entry name" value="RIBOSOMAL_S10"/>
    <property type="match status" value="1"/>
</dbReference>
<name>RS10_SYNE7</name>
<organism>
    <name type="scientific">Synechococcus elongatus (strain ATCC 33912 / PCC 7942 / FACHB-805)</name>
    <name type="common">Anacystis nidulans R2</name>
    <dbReference type="NCBI Taxonomy" id="1140"/>
    <lineage>
        <taxon>Bacteria</taxon>
        <taxon>Bacillati</taxon>
        <taxon>Cyanobacteriota</taxon>
        <taxon>Cyanophyceae</taxon>
        <taxon>Synechococcales</taxon>
        <taxon>Synechococcaceae</taxon>
        <taxon>Synechococcus</taxon>
    </lineage>
</organism>
<reference key="1">
    <citation type="submission" date="2005-08" db="EMBL/GenBank/DDBJ databases">
        <title>Complete sequence of chromosome 1 of Synechococcus elongatus PCC 7942.</title>
        <authorList>
            <consortium name="US DOE Joint Genome Institute"/>
            <person name="Copeland A."/>
            <person name="Lucas S."/>
            <person name="Lapidus A."/>
            <person name="Barry K."/>
            <person name="Detter J.C."/>
            <person name="Glavina T."/>
            <person name="Hammon N."/>
            <person name="Israni S."/>
            <person name="Pitluck S."/>
            <person name="Schmutz J."/>
            <person name="Larimer F."/>
            <person name="Land M."/>
            <person name="Kyrpides N."/>
            <person name="Lykidis A."/>
            <person name="Golden S."/>
            <person name="Richardson P."/>
        </authorList>
    </citation>
    <scope>NUCLEOTIDE SEQUENCE [LARGE SCALE GENOMIC DNA]</scope>
    <source>
        <strain>ATCC 33912 / PCC 7942 / FACHB-805</strain>
    </source>
</reference>
<protein>
    <recommendedName>
        <fullName evidence="1">Small ribosomal subunit protein uS10</fullName>
    </recommendedName>
    <alternativeName>
        <fullName evidence="2">30S ribosomal protein S10</fullName>
    </alternativeName>
</protein>
<sequence length="105" mass="12179">MATLQQQKIRIRLKAFDRRLLDTSCDRIVETANRTNATAIGPIPLPTRRRIYCVLRSPHVDKDSREHFETRTHRRIIDIYQPSSKTIDALMKLDLPAGVDIEVKL</sequence>